<gene>
    <name evidence="1" type="primary">rnhB</name>
    <name type="ordered locus">DP2806</name>
</gene>
<dbReference type="EC" id="3.1.26.4" evidence="1"/>
<dbReference type="EMBL" id="CR522870">
    <property type="protein sequence ID" value="CAG37535.1"/>
    <property type="molecule type" value="Genomic_DNA"/>
</dbReference>
<dbReference type="RefSeq" id="WP_011190047.1">
    <property type="nucleotide sequence ID" value="NC_006138.1"/>
</dbReference>
<dbReference type="SMR" id="Q6AJE5"/>
<dbReference type="STRING" id="177439.DP2806"/>
<dbReference type="KEGG" id="dps:DP2806"/>
<dbReference type="eggNOG" id="COG0164">
    <property type="taxonomic scope" value="Bacteria"/>
</dbReference>
<dbReference type="HOGENOM" id="CLU_036532_2_1_7"/>
<dbReference type="OrthoDB" id="9803420at2"/>
<dbReference type="Proteomes" id="UP000000602">
    <property type="component" value="Chromosome"/>
</dbReference>
<dbReference type="GO" id="GO:0005737">
    <property type="term" value="C:cytoplasm"/>
    <property type="evidence" value="ECO:0007669"/>
    <property type="project" value="UniProtKB-SubCell"/>
</dbReference>
<dbReference type="GO" id="GO:0032299">
    <property type="term" value="C:ribonuclease H2 complex"/>
    <property type="evidence" value="ECO:0007669"/>
    <property type="project" value="TreeGrafter"/>
</dbReference>
<dbReference type="GO" id="GO:0030145">
    <property type="term" value="F:manganese ion binding"/>
    <property type="evidence" value="ECO:0007669"/>
    <property type="project" value="UniProtKB-UniRule"/>
</dbReference>
<dbReference type="GO" id="GO:0003723">
    <property type="term" value="F:RNA binding"/>
    <property type="evidence" value="ECO:0007669"/>
    <property type="project" value="InterPro"/>
</dbReference>
<dbReference type="GO" id="GO:0004523">
    <property type="term" value="F:RNA-DNA hybrid ribonuclease activity"/>
    <property type="evidence" value="ECO:0007669"/>
    <property type="project" value="UniProtKB-UniRule"/>
</dbReference>
<dbReference type="GO" id="GO:0043137">
    <property type="term" value="P:DNA replication, removal of RNA primer"/>
    <property type="evidence" value="ECO:0007669"/>
    <property type="project" value="TreeGrafter"/>
</dbReference>
<dbReference type="GO" id="GO:0006298">
    <property type="term" value="P:mismatch repair"/>
    <property type="evidence" value="ECO:0007669"/>
    <property type="project" value="TreeGrafter"/>
</dbReference>
<dbReference type="CDD" id="cd07182">
    <property type="entry name" value="RNase_HII_bacteria_HII_like"/>
    <property type="match status" value="1"/>
</dbReference>
<dbReference type="Gene3D" id="3.30.420.10">
    <property type="entry name" value="Ribonuclease H-like superfamily/Ribonuclease H"/>
    <property type="match status" value="1"/>
</dbReference>
<dbReference type="HAMAP" id="MF_00052_B">
    <property type="entry name" value="RNase_HII_B"/>
    <property type="match status" value="1"/>
</dbReference>
<dbReference type="InterPro" id="IPR022898">
    <property type="entry name" value="RNase_HII"/>
</dbReference>
<dbReference type="InterPro" id="IPR001352">
    <property type="entry name" value="RNase_HII/HIII"/>
</dbReference>
<dbReference type="InterPro" id="IPR024567">
    <property type="entry name" value="RNase_HII/HIII_dom"/>
</dbReference>
<dbReference type="InterPro" id="IPR012337">
    <property type="entry name" value="RNaseH-like_sf"/>
</dbReference>
<dbReference type="InterPro" id="IPR036397">
    <property type="entry name" value="RNaseH_sf"/>
</dbReference>
<dbReference type="NCBIfam" id="NF000594">
    <property type="entry name" value="PRK00015.1-1"/>
    <property type="match status" value="1"/>
</dbReference>
<dbReference type="NCBIfam" id="NF000595">
    <property type="entry name" value="PRK00015.1-3"/>
    <property type="match status" value="1"/>
</dbReference>
<dbReference type="PANTHER" id="PTHR10954">
    <property type="entry name" value="RIBONUCLEASE H2 SUBUNIT A"/>
    <property type="match status" value="1"/>
</dbReference>
<dbReference type="PANTHER" id="PTHR10954:SF18">
    <property type="entry name" value="RIBONUCLEASE HII"/>
    <property type="match status" value="1"/>
</dbReference>
<dbReference type="Pfam" id="PF01351">
    <property type="entry name" value="RNase_HII"/>
    <property type="match status" value="1"/>
</dbReference>
<dbReference type="SUPFAM" id="SSF53098">
    <property type="entry name" value="Ribonuclease H-like"/>
    <property type="match status" value="1"/>
</dbReference>
<dbReference type="PROSITE" id="PS51975">
    <property type="entry name" value="RNASE_H_2"/>
    <property type="match status" value="1"/>
</dbReference>
<keyword id="KW-0963">Cytoplasm</keyword>
<keyword id="KW-0255">Endonuclease</keyword>
<keyword id="KW-0378">Hydrolase</keyword>
<keyword id="KW-0464">Manganese</keyword>
<keyword id="KW-0479">Metal-binding</keyword>
<keyword id="KW-0540">Nuclease</keyword>
<keyword id="KW-1185">Reference proteome</keyword>
<evidence type="ECO:0000255" key="1">
    <source>
        <dbReference type="HAMAP-Rule" id="MF_00052"/>
    </source>
</evidence>
<evidence type="ECO:0000255" key="2">
    <source>
        <dbReference type="PROSITE-ProRule" id="PRU01319"/>
    </source>
</evidence>
<name>RNH2_DESPS</name>
<reference key="1">
    <citation type="journal article" date="2004" name="Environ. Microbiol.">
        <title>The genome of Desulfotalea psychrophila, a sulfate-reducing bacterium from permanently cold Arctic sediments.</title>
        <authorList>
            <person name="Rabus R."/>
            <person name="Ruepp A."/>
            <person name="Frickey T."/>
            <person name="Rattei T."/>
            <person name="Fartmann B."/>
            <person name="Stark M."/>
            <person name="Bauer M."/>
            <person name="Zibat A."/>
            <person name="Lombardot T."/>
            <person name="Becker I."/>
            <person name="Amann J."/>
            <person name="Gellner K."/>
            <person name="Teeling H."/>
            <person name="Leuschner W.D."/>
            <person name="Gloeckner F.-O."/>
            <person name="Lupas A.N."/>
            <person name="Amann R."/>
            <person name="Klenk H.-P."/>
        </authorList>
    </citation>
    <scope>NUCLEOTIDE SEQUENCE [LARGE SCALE GENOMIC DNA]</scope>
    <source>
        <strain>DSM 12343 / LSv54</strain>
    </source>
</reference>
<sequence length="225" mass="24822">MKDIIPLLSQLPQDNFFLERSLHNLGYDIIAGTDEVGRGPLAGPVIAAAVILPADCDHHLFQDSKILSHKKRVHLFQLLTEIDAFIGIGTVSEKIIDEINILQASLLAMKLAIEDLASNCSRPSFLLVDGKFKVPIDLAQVALIKGESKSASIAAASIVAKVTRDRYMQDLHSQYPQYGFNTNSGYPTKKHREAIGEFGITCYHRRSFKGVKEYVDISQEKGGRG</sequence>
<protein>
    <recommendedName>
        <fullName evidence="1">Ribonuclease HII</fullName>
        <shortName evidence="1">RNase HII</shortName>
        <ecNumber evidence="1">3.1.26.4</ecNumber>
    </recommendedName>
</protein>
<organism>
    <name type="scientific">Desulfotalea psychrophila (strain LSv54 / DSM 12343)</name>
    <dbReference type="NCBI Taxonomy" id="177439"/>
    <lineage>
        <taxon>Bacteria</taxon>
        <taxon>Pseudomonadati</taxon>
        <taxon>Thermodesulfobacteriota</taxon>
        <taxon>Desulfobulbia</taxon>
        <taxon>Desulfobulbales</taxon>
        <taxon>Desulfocapsaceae</taxon>
        <taxon>Desulfotalea</taxon>
    </lineage>
</organism>
<comment type="function">
    <text evidence="1">Endonuclease that specifically degrades the RNA of RNA-DNA hybrids.</text>
</comment>
<comment type="catalytic activity">
    <reaction evidence="1">
        <text>Endonucleolytic cleavage to 5'-phosphomonoester.</text>
        <dbReference type="EC" id="3.1.26.4"/>
    </reaction>
</comment>
<comment type="cofactor">
    <cofactor evidence="1">
        <name>Mn(2+)</name>
        <dbReference type="ChEBI" id="CHEBI:29035"/>
    </cofactor>
    <cofactor evidence="1">
        <name>Mg(2+)</name>
        <dbReference type="ChEBI" id="CHEBI:18420"/>
    </cofactor>
    <text evidence="1">Manganese or magnesium. Binds 1 divalent metal ion per monomer in the absence of substrate. May bind a second metal ion after substrate binding.</text>
</comment>
<comment type="subcellular location">
    <subcellularLocation>
        <location evidence="1">Cytoplasm</location>
    </subcellularLocation>
</comment>
<comment type="similarity">
    <text evidence="1">Belongs to the RNase HII family.</text>
</comment>
<proteinExistence type="inferred from homology"/>
<accession>Q6AJE5</accession>
<feature type="chain" id="PRO_0000235718" description="Ribonuclease HII">
    <location>
        <begin position="1"/>
        <end position="225"/>
    </location>
</feature>
<feature type="domain" description="RNase H type-2" evidence="2">
    <location>
        <begin position="28"/>
        <end position="220"/>
    </location>
</feature>
<feature type="binding site" evidence="1">
    <location>
        <position position="34"/>
    </location>
    <ligand>
        <name>a divalent metal cation</name>
        <dbReference type="ChEBI" id="CHEBI:60240"/>
    </ligand>
</feature>
<feature type="binding site" evidence="1">
    <location>
        <position position="35"/>
    </location>
    <ligand>
        <name>a divalent metal cation</name>
        <dbReference type="ChEBI" id="CHEBI:60240"/>
    </ligand>
</feature>
<feature type="binding site" evidence="1">
    <location>
        <position position="129"/>
    </location>
    <ligand>
        <name>a divalent metal cation</name>
        <dbReference type="ChEBI" id="CHEBI:60240"/>
    </ligand>
</feature>